<organism>
    <name type="scientific">Rattus norvegicus</name>
    <name type="common">Rat</name>
    <dbReference type="NCBI Taxonomy" id="10116"/>
    <lineage>
        <taxon>Eukaryota</taxon>
        <taxon>Metazoa</taxon>
        <taxon>Chordata</taxon>
        <taxon>Craniata</taxon>
        <taxon>Vertebrata</taxon>
        <taxon>Euteleostomi</taxon>
        <taxon>Mammalia</taxon>
        <taxon>Eutheria</taxon>
        <taxon>Euarchontoglires</taxon>
        <taxon>Glires</taxon>
        <taxon>Rodentia</taxon>
        <taxon>Myomorpha</taxon>
        <taxon>Muroidea</taxon>
        <taxon>Muridae</taxon>
        <taxon>Murinae</taxon>
        <taxon>Rattus</taxon>
    </lineage>
</organism>
<dbReference type="EMBL" id="X13149">
    <property type="protein sequence ID" value="CAA31547.1"/>
    <property type="molecule type" value="mRNA"/>
</dbReference>
<dbReference type="PIR" id="A26423">
    <property type="entry name" value="A26423"/>
</dbReference>
<dbReference type="SMR" id="P09005"/>
<dbReference type="FunCoup" id="P09005">
    <property type="interactions" value="49"/>
</dbReference>
<dbReference type="MEROPS" id="I04.049"/>
<dbReference type="PaxDb" id="10116-ENSRNOP00000013961"/>
<dbReference type="AGR" id="RGD:3745"/>
<dbReference type="InParanoid" id="P09005"/>
<dbReference type="Proteomes" id="UP000002494">
    <property type="component" value="Unplaced"/>
</dbReference>
<dbReference type="GO" id="GO:0005615">
    <property type="term" value="C:extracellular space"/>
    <property type="evidence" value="ECO:0000318"/>
    <property type="project" value="GO_Central"/>
</dbReference>
<dbReference type="GO" id="GO:0004867">
    <property type="term" value="F:serine-type endopeptidase inhibitor activity"/>
    <property type="evidence" value="ECO:0000318"/>
    <property type="project" value="GO_Central"/>
</dbReference>
<dbReference type="GO" id="GO:0034097">
    <property type="term" value="P:response to cytokine"/>
    <property type="evidence" value="ECO:0000318"/>
    <property type="project" value="GO_Central"/>
</dbReference>
<dbReference type="FunFam" id="2.30.39.10:FF:000002">
    <property type="entry name" value="Serpin family D member 1"/>
    <property type="match status" value="1"/>
</dbReference>
<dbReference type="Gene3D" id="2.30.39.10">
    <property type="entry name" value="Alpha-1-antitrypsin, domain 1"/>
    <property type="match status" value="1"/>
</dbReference>
<dbReference type="Gene3D" id="3.30.497.10">
    <property type="entry name" value="Antithrombin, subunit I, domain 2"/>
    <property type="match status" value="1"/>
</dbReference>
<dbReference type="InterPro" id="IPR023795">
    <property type="entry name" value="Serpin_CS"/>
</dbReference>
<dbReference type="InterPro" id="IPR023796">
    <property type="entry name" value="Serpin_dom"/>
</dbReference>
<dbReference type="InterPro" id="IPR000215">
    <property type="entry name" value="Serpin_fam"/>
</dbReference>
<dbReference type="InterPro" id="IPR036186">
    <property type="entry name" value="Serpin_sf"/>
</dbReference>
<dbReference type="InterPro" id="IPR042178">
    <property type="entry name" value="Serpin_sf_1"/>
</dbReference>
<dbReference type="InterPro" id="IPR042185">
    <property type="entry name" value="Serpin_sf_2"/>
</dbReference>
<dbReference type="PANTHER" id="PTHR11461:SF195">
    <property type="entry name" value="SERINE PROTEASE INHIBITOR A3A-RELATED"/>
    <property type="match status" value="1"/>
</dbReference>
<dbReference type="PANTHER" id="PTHR11461">
    <property type="entry name" value="SERINE PROTEASE INHIBITOR, SERPIN"/>
    <property type="match status" value="1"/>
</dbReference>
<dbReference type="Pfam" id="PF00079">
    <property type="entry name" value="Serpin"/>
    <property type="match status" value="1"/>
</dbReference>
<dbReference type="SMART" id="SM00093">
    <property type="entry name" value="SERPIN"/>
    <property type="match status" value="1"/>
</dbReference>
<dbReference type="SUPFAM" id="SSF56574">
    <property type="entry name" value="Serpins"/>
    <property type="match status" value="1"/>
</dbReference>
<dbReference type="PROSITE" id="PS00284">
    <property type="entry name" value="SERPIN"/>
    <property type="match status" value="1"/>
</dbReference>
<reference key="1">
    <citation type="journal article" date="1987" name="Nature">
        <title>Accelerated evolution in the reactive centre regions of serine protease inhibitors.</title>
        <authorList>
            <person name="Hill R.E."/>
            <person name="Hastie N.D."/>
        </authorList>
    </citation>
    <scope>NUCLEOTIDE SEQUENCE [MRNA]</scope>
</reference>
<comment type="similarity">
    <text evidence="2">Belongs to the serpin family.</text>
</comment>
<keyword id="KW-0646">Protease inhibitor</keyword>
<keyword id="KW-1185">Reference proteome</keyword>
<keyword id="KW-0722">Serine protease inhibitor</keyword>
<protein>
    <recommendedName>
        <fullName>Serine protease inhibitor 2.1</fullName>
        <shortName>SPI-2.1</shortName>
    </recommendedName>
</protein>
<evidence type="ECO:0000250" key="1"/>
<evidence type="ECO:0000305" key="2"/>
<accession>P09005</accession>
<proteinExistence type="evidence at transcript level"/>
<sequence length="214" mass="24218">LVLVNYLLFKGKWKVPFNPNDTFESEFYLDEKRSVKVPMMKIKEVTTPYVRDEELSCSVLELKYTGNASALFILPDQGKMQQVESSLQPETLKKWKDSLIPSIINDLRMPKFSISTDYSLEKEVLPELGIKKVFSQQADLSRITGTKDLYVSQVVHKAVLDVAETGTEATAATGVATVIRRQPRTLNFNQPFMVFITDMDSQSILFVAKITNPS</sequence>
<feature type="chain" id="PRO_0000094134" description="Serine protease inhibitor 2.1">
    <location>
        <begin position="1" status="less than"/>
        <end position="214"/>
    </location>
</feature>
<feature type="site" description="Reactive bond" evidence="1">
    <location>
        <begin position="180"/>
        <end position="181"/>
    </location>
</feature>
<feature type="non-terminal residue">
    <location>
        <position position="1"/>
    </location>
</feature>
<name>SPI21_RAT</name>